<keyword id="KW-0963">Cytoplasm</keyword>
<keyword id="KW-0251">Elongation factor</keyword>
<keyword id="KW-0342">GTP-binding</keyword>
<keyword id="KW-0547">Nucleotide-binding</keyword>
<keyword id="KW-0648">Protein biosynthesis</keyword>
<proteinExistence type="inferred from homology"/>
<name>EFG_STRZT</name>
<protein>
    <recommendedName>
        <fullName evidence="1">Elongation factor G</fullName>
        <shortName evidence="1">EF-G</shortName>
    </recommendedName>
</protein>
<comment type="function">
    <text evidence="1">Catalyzes the GTP-dependent ribosomal translocation step during translation elongation. During this step, the ribosome changes from the pre-translocational (PRE) to the post-translocational (POST) state as the newly formed A-site-bound peptidyl-tRNA and P-site-bound deacylated tRNA move to the P and E sites, respectively. Catalyzes the coordinated movement of the two tRNA molecules, the mRNA and conformational changes in the ribosome.</text>
</comment>
<comment type="subcellular location">
    <subcellularLocation>
        <location evidence="1">Cytoplasm</location>
    </subcellularLocation>
</comment>
<comment type="similarity">
    <text evidence="1">Belongs to the TRAFAC class translation factor GTPase superfamily. Classic translation factor GTPase family. EF-G/EF-2 subfamily.</text>
</comment>
<sequence length="693" mass="76835">MAREFSLEKTRNIGIMAHVDAGKTTTTERILYYTGKIHKIGETHEGASQMDWMEQEQERGITITSAATTAQWNNHRVNIIDTPGHVDFTIEVQRSLRVLDGAVTVLDSQSGVEPQTETVWRQATEYGVPRIVFANKMDKIGADFLYSVSTLHDRLQANAHPIQLPIGSEDDFRGIIDLIKMKAEIYTNDLGTDILEEDIPAEYLDQAQEYREKLIEAVAETDEELMMKYLEGEEITNEELKAGIRKATINVEFFPVLCGSAFKNKGVQLMLDAVIDYLPSPLDIPAIKGINPDTDAEETRPASDEEPFAALAFKIMTDPFVGRLTFFRVYSGVLQSGSYVLNTSKGKRERIGRILQMHANSRQEIDTVYSGDIAAAVGLKDTTTGDSLTDEKSKIILESINVPEPVIQLMVEPKSKADQDKMGIALQKLAEEDPTFRVETNVETGETVISGMGELHLDVLVDRMRREFKVEANVGAPQVSYRETFRASTQARGFFKRQSGGKGQFGDVWIEFTPNEEGKGFEFENAIVGGVVPREFIPAVEKGLVESMANGVLAGYPMVDVKAKLYDGSYHDVDSSETAFKIAASLSLKEAAKSAQPAILEPMMLVTITVPEENLGDVMGHVTARRGRVDGMEAHGNSQIVRAYVPLAEMFGYATVLRSASQGRGTFMMVFDHYEDVPKSVQEEIIKKNKGED</sequence>
<accession>C1CPE5</accession>
<feature type="chain" id="PRO_1000201492" description="Elongation factor G">
    <location>
        <begin position="1"/>
        <end position="693"/>
    </location>
</feature>
<feature type="domain" description="tr-type G">
    <location>
        <begin position="8"/>
        <end position="282"/>
    </location>
</feature>
<feature type="binding site" evidence="1">
    <location>
        <begin position="17"/>
        <end position="24"/>
    </location>
    <ligand>
        <name>GTP</name>
        <dbReference type="ChEBI" id="CHEBI:37565"/>
    </ligand>
</feature>
<feature type="binding site" evidence="1">
    <location>
        <begin position="81"/>
        <end position="85"/>
    </location>
    <ligand>
        <name>GTP</name>
        <dbReference type="ChEBI" id="CHEBI:37565"/>
    </ligand>
</feature>
<feature type="binding site" evidence="1">
    <location>
        <begin position="135"/>
        <end position="138"/>
    </location>
    <ligand>
        <name>GTP</name>
        <dbReference type="ChEBI" id="CHEBI:37565"/>
    </ligand>
</feature>
<reference key="1">
    <citation type="journal article" date="2010" name="Genome Biol.">
        <title>Structure and dynamics of the pan-genome of Streptococcus pneumoniae and closely related species.</title>
        <authorList>
            <person name="Donati C."/>
            <person name="Hiller N.L."/>
            <person name="Tettelin H."/>
            <person name="Muzzi A."/>
            <person name="Croucher N.J."/>
            <person name="Angiuoli S.V."/>
            <person name="Oggioni M."/>
            <person name="Dunning Hotopp J.C."/>
            <person name="Hu F.Z."/>
            <person name="Riley D.R."/>
            <person name="Covacci A."/>
            <person name="Mitchell T.J."/>
            <person name="Bentley S.D."/>
            <person name="Kilian M."/>
            <person name="Ehrlich G.D."/>
            <person name="Rappuoli R."/>
            <person name="Moxon E.R."/>
            <person name="Masignani V."/>
        </authorList>
    </citation>
    <scope>NUCLEOTIDE SEQUENCE [LARGE SCALE GENOMIC DNA]</scope>
    <source>
        <strain>Taiwan19F-14</strain>
    </source>
</reference>
<organism>
    <name type="scientific">Streptococcus pneumoniae (strain Taiwan19F-14)</name>
    <dbReference type="NCBI Taxonomy" id="487213"/>
    <lineage>
        <taxon>Bacteria</taxon>
        <taxon>Bacillati</taxon>
        <taxon>Bacillota</taxon>
        <taxon>Bacilli</taxon>
        <taxon>Lactobacillales</taxon>
        <taxon>Streptococcaceae</taxon>
        <taxon>Streptococcus</taxon>
    </lineage>
</organism>
<dbReference type="EMBL" id="CP000921">
    <property type="protein sequence ID" value="ACO22559.1"/>
    <property type="molecule type" value="Genomic_DNA"/>
</dbReference>
<dbReference type="RefSeq" id="WP_000090347.1">
    <property type="nucleotide sequence ID" value="NC_012469.1"/>
</dbReference>
<dbReference type="SMR" id="C1CPE5"/>
<dbReference type="GeneID" id="45652251"/>
<dbReference type="KEGG" id="snt:SPT_0318"/>
<dbReference type="HOGENOM" id="CLU_002794_4_1_9"/>
<dbReference type="GO" id="GO:0005737">
    <property type="term" value="C:cytoplasm"/>
    <property type="evidence" value="ECO:0007669"/>
    <property type="project" value="UniProtKB-SubCell"/>
</dbReference>
<dbReference type="GO" id="GO:0005525">
    <property type="term" value="F:GTP binding"/>
    <property type="evidence" value="ECO:0007669"/>
    <property type="project" value="UniProtKB-UniRule"/>
</dbReference>
<dbReference type="GO" id="GO:0003924">
    <property type="term" value="F:GTPase activity"/>
    <property type="evidence" value="ECO:0007669"/>
    <property type="project" value="InterPro"/>
</dbReference>
<dbReference type="GO" id="GO:0003746">
    <property type="term" value="F:translation elongation factor activity"/>
    <property type="evidence" value="ECO:0007669"/>
    <property type="project" value="UniProtKB-UniRule"/>
</dbReference>
<dbReference type="GO" id="GO:0032790">
    <property type="term" value="P:ribosome disassembly"/>
    <property type="evidence" value="ECO:0007669"/>
    <property type="project" value="TreeGrafter"/>
</dbReference>
<dbReference type="CDD" id="cd01886">
    <property type="entry name" value="EF-G"/>
    <property type="match status" value="1"/>
</dbReference>
<dbReference type="CDD" id="cd16262">
    <property type="entry name" value="EFG_III"/>
    <property type="match status" value="1"/>
</dbReference>
<dbReference type="CDD" id="cd01434">
    <property type="entry name" value="EFG_mtEFG1_IV"/>
    <property type="match status" value="1"/>
</dbReference>
<dbReference type="CDD" id="cd03713">
    <property type="entry name" value="EFG_mtEFG_C"/>
    <property type="match status" value="1"/>
</dbReference>
<dbReference type="CDD" id="cd04088">
    <property type="entry name" value="EFG_mtEFG_II"/>
    <property type="match status" value="1"/>
</dbReference>
<dbReference type="FunFam" id="2.40.30.10:FF:000006">
    <property type="entry name" value="Elongation factor G"/>
    <property type="match status" value="1"/>
</dbReference>
<dbReference type="FunFam" id="3.30.230.10:FF:000003">
    <property type="entry name" value="Elongation factor G"/>
    <property type="match status" value="1"/>
</dbReference>
<dbReference type="FunFam" id="3.30.70.240:FF:000001">
    <property type="entry name" value="Elongation factor G"/>
    <property type="match status" value="1"/>
</dbReference>
<dbReference type="FunFam" id="3.30.70.870:FF:000001">
    <property type="entry name" value="Elongation factor G"/>
    <property type="match status" value="1"/>
</dbReference>
<dbReference type="FunFam" id="3.40.50.300:FF:000029">
    <property type="entry name" value="Elongation factor G"/>
    <property type="match status" value="1"/>
</dbReference>
<dbReference type="Gene3D" id="3.30.230.10">
    <property type="match status" value="1"/>
</dbReference>
<dbReference type="Gene3D" id="3.30.70.240">
    <property type="match status" value="1"/>
</dbReference>
<dbReference type="Gene3D" id="3.30.70.870">
    <property type="entry name" value="Elongation Factor G (Translational Gtpase), domain 3"/>
    <property type="match status" value="1"/>
</dbReference>
<dbReference type="Gene3D" id="3.40.50.300">
    <property type="entry name" value="P-loop containing nucleotide triphosphate hydrolases"/>
    <property type="match status" value="1"/>
</dbReference>
<dbReference type="Gene3D" id="2.40.30.10">
    <property type="entry name" value="Translation factors"/>
    <property type="match status" value="1"/>
</dbReference>
<dbReference type="HAMAP" id="MF_00054_B">
    <property type="entry name" value="EF_G_EF_2_B"/>
    <property type="match status" value="1"/>
</dbReference>
<dbReference type="InterPro" id="IPR053905">
    <property type="entry name" value="EF-G-like_DII"/>
</dbReference>
<dbReference type="InterPro" id="IPR041095">
    <property type="entry name" value="EFG_II"/>
</dbReference>
<dbReference type="InterPro" id="IPR009022">
    <property type="entry name" value="EFG_III"/>
</dbReference>
<dbReference type="InterPro" id="IPR035647">
    <property type="entry name" value="EFG_III/V"/>
</dbReference>
<dbReference type="InterPro" id="IPR047872">
    <property type="entry name" value="EFG_IV"/>
</dbReference>
<dbReference type="InterPro" id="IPR035649">
    <property type="entry name" value="EFG_V"/>
</dbReference>
<dbReference type="InterPro" id="IPR000640">
    <property type="entry name" value="EFG_V-like"/>
</dbReference>
<dbReference type="InterPro" id="IPR031157">
    <property type="entry name" value="G_TR_CS"/>
</dbReference>
<dbReference type="InterPro" id="IPR027417">
    <property type="entry name" value="P-loop_NTPase"/>
</dbReference>
<dbReference type="InterPro" id="IPR020568">
    <property type="entry name" value="Ribosomal_Su5_D2-typ_SF"/>
</dbReference>
<dbReference type="InterPro" id="IPR014721">
    <property type="entry name" value="Ribsml_uS5_D2-typ_fold_subgr"/>
</dbReference>
<dbReference type="InterPro" id="IPR005225">
    <property type="entry name" value="Small_GTP-bd"/>
</dbReference>
<dbReference type="InterPro" id="IPR000795">
    <property type="entry name" value="T_Tr_GTP-bd_dom"/>
</dbReference>
<dbReference type="InterPro" id="IPR009000">
    <property type="entry name" value="Transl_B-barrel_sf"/>
</dbReference>
<dbReference type="InterPro" id="IPR004540">
    <property type="entry name" value="Transl_elong_EFG/EF2"/>
</dbReference>
<dbReference type="InterPro" id="IPR005517">
    <property type="entry name" value="Transl_elong_EFG/EF2_IV"/>
</dbReference>
<dbReference type="NCBIfam" id="TIGR00484">
    <property type="entry name" value="EF-G"/>
    <property type="match status" value="1"/>
</dbReference>
<dbReference type="NCBIfam" id="NF009379">
    <property type="entry name" value="PRK12740.1-3"/>
    <property type="match status" value="1"/>
</dbReference>
<dbReference type="NCBIfam" id="NF009381">
    <property type="entry name" value="PRK12740.1-5"/>
    <property type="match status" value="1"/>
</dbReference>
<dbReference type="NCBIfam" id="TIGR00231">
    <property type="entry name" value="small_GTP"/>
    <property type="match status" value="1"/>
</dbReference>
<dbReference type="PANTHER" id="PTHR43261:SF1">
    <property type="entry name" value="RIBOSOME-RELEASING FACTOR 2, MITOCHONDRIAL"/>
    <property type="match status" value="1"/>
</dbReference>
<dbReference type="PANTHER" id="PTHR43261">
    <property type="entry name" value="TRANSLATION ELONGATION FACTOR G-RELATED"/>
    <property type="match status" value="1"/>
</dbReference>
<dbReference type="Pfam" id="PF22042">
    <property type="entry name" value="EF-G_D2"/>
    <property type="match status" value="1"/>
</dbReference>
<dbReference type="Pfam" id="PF00679">
    <property type="entry name" value="EFG_C"/>
    <property type="match status" value="1"/>
</dbReference>
<dbReference type="Pfam" id="PF14492">
    <property type="entry name" value="EFG_III"/>
    <property type="match status" value="1"/>
</dbReference>
<dbReference type="Pfam" id="PF03764">
    <property type="entry name" value="EFG_IV"/>
    <property type="match status" value="1"/>
</dbReference>
<dbReference type="Pfam" id="PF00009">
    <property type="entry name" value="GTP_EFTU"/>
    <property type="match status" value="1"/>
</dbReference>
<dbReference type="PRINTS" id="PR00315">
    <property type="entry name" value="ELONGATNFCT"/>
</dbReference>
<dbReference type="SMART" id="SM00838">
    <property type="entry name" value="EFG_C"/>
    <property type="match status" value="1"/>
</dbReference>
<dbReference type="SMART" id="SM00889">
    <property type="entry name" value="EFG_IV"/>
    <property type="match status" value="1"/>
</dbReference>
<dbReference type="SUPFAM" id="SSF54980">
    <property type="entry name" value="EF-G C-terminal domain-like"/>
    <property type="match status" value="2"/>
</dbReference>
<dbReference type="SUPFAM" id="SSF52540">
    <property type="entry name" value="P-loop containing nucleoside triphosphate hydrolases"/>
    <property type="match status" value="1"/>
</dbReference>
<dbReference type="SUPFAM" id="SSF54211">
    <property type="entry name" value="Ribosomal protein S5 domain 2-like"/>
    <property type="match status" value="1"/>
</dbReference>
<dbReference type="SUPFAM" id="SSF50447">
    <property type="entry name" value="Translation proteins"/>
    <property type="match status" value="1"/>
</dbReference>
<dbReference type="PROSITE" id="PS00301">
    <property type="entry name" value="G_TR_1"/>
    <property type="match status" value="1"/>
</dbReference>
<dbReference type="PROSITE" id="PS51722">
    <property type="entry name" value="G_TR_2"/>
    <property type="match status" value="1"/>
</dbReference>
<gene>
    <name evidence="1" type="primary">fusA</name>
    <name type="ordered locus">SPT_0318</name>
</gene>
<evidence type="ECO:0000255" key="1">
    <source>
        <dbReference type="HAMAP-Rule" id="MF_00054"/>
    </source>
</evidence>